<sequence length="170" mass="19355">MAKLLCTLFLAGFVFLANAYSTDPPNPPDIENVFDGIPSIFNPVNWISNIASFFNPSNWVSNIPSILNPVNWVKKIIDINNPFTYIPDFLNPFHYFPKLNPIKWIPGWIPGLGKDRCLLPKVTGPCKASLTRYYYDKDTKACVEFIYGGCRGNRNNFKQKDECEKACTDH</sequence>
<name>VKT1_ARAVE</name>
<dbReference type="EMBL" id="JX844659">
    <property type="protein sequence ID" value="AFX95921.1"/>
    <property type="molecule type" value="mRNA"/>
</dbReference>
<dbReference type="EMBL" id="AY091482">
    <property type="protein sequence ID" value="AAM14403.1"/>
    <property type="molecule type" value="mRNA"/>
</dbReference>
<dbReference type="SMR" id="Q8T3S7"/>
<dbReference type="MEROPS" id="I02.964"/>
<dbReference type="ArachnoServer" id="AS000114">
    <property type="toxin name" value="U1-aranetoxin-Av1a"/>
</dbReference>
<dbReference type="GO" id="GO:0005615">
    <property type="term" value="C:extracellular space"/>
    <property type="evidence" value="ECO:0007669"/>
    <property type="project" value="TreeGrafter"/>
</dbReference>
<dbReference type="GO" id="GO:0015459">
    <property type="term" value="F:potassium channel regulator activity"/>
    <property type="evidence" value="ECO:0007669"/>
    <property type="project" value="UniProtKB-KW"/>
</dbReference>
<dbReference type="GO" id="GO:0004867">
    <property type="term" value="F:serine-type endopeptidase inhibitor activity"/>
    <property type="evidence" value="ECO:0000314"/>
    <property type="project" value="UniProtKB"/>
</dbReference>
<dbReference type="GO" id="GO:0090729">
    <property type="term" value="F:toxin activity"/>
    <property type="evidence" value="ECO:0007669"/>
    <property type="project" value="UniProtKB-KW"/>
</dbReference>
<dbReference type="GO" id="GO:0044562">
    <property type="term" value="P:envenomation resulting in negative regulation of voltage-gated potassium channel activity in another organism"/>
    <property type="evidence" value="ECO:0007669"/>
    <property type="project" value="UniProtKB-ARBA"/>
</dbReference>
<dbReference type="CDD" id="cd00109">
    <property type="entry name" value="Kunitz-type"/>
    <property type="match status" value="1"/>
</dbReference>
<dbReference type="FunFam" id="4.10.410.10:FF:000015">
    <property type="entry name" value="WAP four-disulfide core domain 6A"/>
    <property type="match status" value="1"/>
</dbReference>
<dbReference type="Gene3D" id="4.10.410.10">
    <property type="entry name" value="Pancreatic trypsin inhibitor Kunitz domain"/>
    <property type="match status" value="1"/>
</dbReference>
<dbReference type="InterPro" id="IPR002223">
    <property type="entry name" value="Kunitz_BPTI"/>
</dbReference>
<dbReference type="InterPro" id="IPR036880">
    <property type="entry name" value="Kunitz_BPTI_sf"/>
</dbReference>
<dbReference type="InterPro" id="IPR020901">
    <property type="entry name" value="Prtase_inh_Kunz-CS"/>
</dbReference>
<dbReference type="InterPro" id="IPR050098">
    <property type="entry name" value="TFPI/VKTCI-like"/>
</dbReference>
<dbReference type="PANTHER" id="PTHR10083:SF374">
    <property type="entry name" value="BPTI_KUNITZ INHIBITOR DOMAIN-CONTAINING PROTEIN"/>
    <property type="match status" value="1"/>
</dbReference>
<dbReference type="PANTHER" id="PTHR10083">
    <property type="entry name" value="KUNITZ-TYPE PROTEASE INHIBITOR-RELATED"/>
    <property type="match status" value="1"/>
</dbReference>
<dbReference type="Pfam" id="PF00014">
    <property type="entry name" value="Kunitz_BPTI"/>
    <property type="match status" value="1"/>
</dbReference>
<dbReference type="PRINTS" id="PR00759">
    <property type="entry name" value="BASICPTASE"/>
</dbReference>
<dbReference type="SMART" id="SM00131">
    <property type="entry name" value="KU"/>
    <property type="match status" value="1"/>
</dbReference>
<dbReference type="SUPFAM" id="SSF57362">
    <property type="entry name" value="BPTI-like"/>
    <property type="match status" value="1"/>
</dbReference>
<dbReference type="PROSITE" id="PS00280">
    <property type="entry name" value="BPTI_KUNITZ_1"/>
    <property type="match status" value="1"/>
</dbReference>
<dbReference type="PROSITE" id="PS50279">
    <property type="entry name" value="BPTI_KUNITZ_2"/>
    <property type="match status" value="1"/>
</dbReference>
<comment type="function">
    <text evidence="4">Serine protease inhibitor with activity against plasmin (IC(50)=10.07 nM), trypsin (IC(50)=43.39 nM), chymotrypsin (IC(50)=109.25 nM) and neutrophil elastase (IC(50)=446.93 nM).</text>
</comment>
<comment type="subcellular location">
    <subcellularLocation>
        <location evidence="8">Secreted</location>
    </subcellularLocation>
</comment>
<comment type="tissue specificity">
    <text evidence="4">Only expressed in epidermis.</text>
</comment>
<comment type="PTM">
    <text evidence="4">O-glycosylated.</text>
</comment>
<comment type="miscellaneous">
    <text evidence="4">Negative results: not found in fat body, midgut and venom gland.</text>
</comment>
<comment type="similarity">
    <text evidence="7">Belongs to the venom Kunitz-type family. 02 (native) subfamily.</text>
</comment>
<reference evidence="9" key="1">
    <citation type="journal article" date="2013" name="PLoS ONE">
        <title>A spider-derived kunitz-type serine protease inhibitor that acts as a plasmin inhibitor and an elastase inhibitor.</title>
        <authorList>
            <person name="Wan H."/>
            <person name="Lee K.S."/>
            <person name="Kim B.Y."/>
            <person name="Zou F.M."/>
            <person name="Yoon H.J."/>
            <person name="Je Y.H."/>
            <person name="Li J."/>
            <person name="Jin B.R."/>
        </authorList>
    </citation>
    <scope>NUCLEOTIDE SEQUENCE [MRNA]</scope>
    <scope>FUNCTION</scope>
    <scope>TISSUE SPECIFICITY</scope>
    <scope>GLYCOSYLATION</scope>
    <scope>RECOMBINANT EXPRESSION</scope>
</reference>
<reference key="2">
    <citation type="journal article" date="2002" name="Int. J. Ind. Entomol.">
        <title>Molecular cloning of two cDNAs encoding an insecticidal toxin from the spider, Araneus ventricosus, and construction of a recombinant baculovirus expressing a spider toxin.</title>
        <authorList>
            <person name="Jung E.H."/>
            <person name="Lee K.S."/>
            <person name="Han J.H."/>
            <person name="Je Y.H."/>
            <person name="Chang J.H."/>
            <person name="Roh J.Y."/>
            <person name="Sohn H.D."/>
            <person name="Jin B.R."/>
        </authorList>
    </citation>
    <scope>NUCLEOTIDE SEQUENCE [MRNA] OF 91-170</scope>
    <scope>RECOMBINANT EXPRESSION</scope>
    <source>
        <tissue>Venom gland</tissue>
    </source>
</reference>
<protein>
    <recommendedName>
        <fullName evidence="7">Kunitz-type U1-aranetoxin-Av1a</fullName>
        <shortName evidence="7">U1-AATX-Av1a</shortName>
    </recommendedName>
    <alternativeName>
        <fullName evidence="5">Kunitz-type serine protease inhibitor AvKTI</fullName>
    </alternativeName>
    <alternativeName>
        <fullName>Toxin 1</fullName>
        <shortName evidence="6">AvTox-1</shortName>
    </alternativeName>
</protein>
<feature type="signal peptide" evidence="2">
    <location>
        <begin position="1"/>
        <end position="19"/>
    </location>
</feature>
<feature type="propeptide" id="PRO_0000462303" evidence="8">
    <location>
        <begin position="20"/>
        <end position="113"/>
    </location>
</feature>
<feature type="chain" id="PRO_0000380153" description="Kunitz-type U1-aranetoxin-Av1a">
    <location>
        <begin position="114"/>
        <end position="170"/>
    </location>
</feature>
<feature type="domain" description="BPTI/Kunitz inhibitor" evidence="3">
    <location>
        <begin position="117"/>
        <end position="167"/>
    </location>
</feature>
<feature type="site" description="Reactive bond for serine proteases" evidence="8">
    <location>
        <begin position="127"/>
        <end position="128"/>
    </location>
</feature>
<feature type="site" description="Reactive bond for trypsin" evidence="1">
    <location>
        <begin position="137"/>
        <end position="138"/>
    </location>
</feature>
<feature type="disulfide bond" evidence="3">
    <location>
        <begin position="117"/>
        <end position="167"/>
    </location>
</feature>
<feature type="disulfide bond" evidence="3">
    <location>
        <begin position="126"/>
        <end position="150"/>
    </location>
</feature>
<feature type="disulfide bond" evidence="3">
    <location>
        <begin position="142"/>
        <end position="163"/>
    </location>
</feature>
<feature type="sequence conflict" description="In Ref. 2; AAM14403." evidence="7" ref="2">
    <original>N</original>
    <variation>M</variation>
    <location>
        <position position="91"/>
    </location>
</feature>
<feature type="sequence conflict" description="In Ref. 2; AAM14403." evidence="7" ref="2">
    <original>K</original>
    <variation>T</variation>
    <location>
        <position position="103"/>
    </location>
</feature>
<feature type="sequence conflict" description="In Ref. 2; AAM14403." evidence="7" ref="2">
    <original>Q</original>
    <variation>R</variation>
    <location>
        <position position="159"/>
    </location>
</feature>
<proteinExistence type="evidence at protein level"/>
<evidence type="ECO:0000250" key="1"/>
<evidence type="ECO:0000255" key="2"/>
<evidence type="ECO:0000255" key="3">
    <source>
        <dbReference type="PROSITE-ProRule" id="PRU00031"/>
    </source>
</evidence>
<evidence type="ECO:0000269" key="4">
    <source>
    </source>
</evidence>
<evidence type="ECO:0000303" key="5">
    <source>
    </source>
</evidence>
<evidence type="ECO:0000303" key="6">
    <source ref="2"/>
</evidence>
<evidence type="ECO:0000305" key="7"/>
<evidence type="ECO:0000305" key="8">
    <source>
    </source>
</evidence>
<evidence type="ECO:0000312" key="9">
    <source>
        <dbReference type="EMBL" id="AFX95921.1"/>
    </source>
</evidence>
<keyword id="KW-1015">Disulfide bond</keyword>
<keyword id="KW-0325">Glycoprotein</keyword>
<keyword id="KW-0646">Protease inhibitor</keyword>
<keyword id="KW-0964">Secreted</keyword>
<keyword id="KW-0722">Serine protease inhibitor</keyword>
<keyword id="KW-0732">Signal</keyword>
<accession>Q8T3S7</accession>
<accession>K7YYJ2</accession>
<organism>
    <name type="scientific">Araneus ventricosus</name>
    <name type="common">Orbweaver spider</name>
    <name type="synonym">Epeira ventricosa</name>
    <dbReference type="NCBI Taxonomy" id="182803"/>
    <lineage>
        <taxon>Eukaryota</taxon>
        <taxon>Metazoa</taxon>
        <taxon>Ecdysozoa</taxon>
        <taxon>Arthropoda</taxon>
        <taxon>Chelicerata</taxon>
        <taxon>Arachnida</taxon>
        <taxon>Araneae</taxon>
        <taxon>Araneomorphae</taxon>
        <taxon>Entelegynae</taxon>
        <taxon>Araneoidea</taxon>
        <taxon>Araneidae</taxon>
        <taxon>Araneus</taxon>
    </lineage>
</organism>